<comment type="function">
    <text evidence="1">Catalyzes the transfer of a dimethylallyl group onto the adenine at position 37 in tRNAs that read codons beginning with uridine, leading to the formation of N6-(dimethylallyl)adenosine (i(6)A).</text>
</comment>
<comment type="catalytic activity">
    <reaction evidence="1">
        <text>adenosine(37) in tRNA + dimethylallyl diphosphate = N(6)-dimethylallyladenosine(37) in tRNA + diphosphate</text>
        <dbReference type="Rhea" id="RHEA:26482"/>
        <dbReference type="Rhea" id="RHEA-COMP:10162"/>
        <dbReference type="Rhea" id="RHEA-COMP:10375"/>
        <dbReference type="ChEBI" id="CHEBI:33019"/>
        <dbReference type="ChEBI" id="CHEBI:57623"/>
        <dbReference type="ChEBI" id="CHEBI:74411"/>
        <dbReference type="ChEBI" id="CHEBI:74415"/>
        <dbReference type="EC" id="2.5.1.75"/>
    </reaction>
</comment>
<comment type="cofactor">
    <cofactor evidence="1">
        <name>Mg(2+)</name>
        <dbReference type="ChEBI" id="CHEBI:18420"/>
    </cofactor>
</comment>
<comment type="subunit">
    <text evidence="1">Monomer.</text>
</comment>
<comment type="similarity">
    <text evidence="1">Belongs to the IPP transferase family.</text>
</comment>
<protein>
    <recommendedName>
        <fullName evidence="1">tRNA dimethylallyltransferase</fullName>
        <ecNumber evidence="1">2.5.1.75</ecNumber>
    </recommendedName>
    <alternativeName>
        <fullName evidence="1">Dimethylallyl diphosphate:tRNA dimethylallyltransferase</fullName>
        <shortName evidence="1">DMAPP:tRNA dimethylallyltransferase</shortName>
        <shortName evidence="1">DMATase</shortName>
    </alternativeName>
    <alternativeName>
        <fullName evidence="1">Isopentenyl-diphosphate:tRNA isopentenyltransferase</fullName>
        <shortName evidence="1">IPP transferase</shortName>
        <shortName evidence="1">IPPT</shortName>
        <shortName evidence="1">IPTase</shortName>
    </alternativeName>
</protein>
<reference key="1">
    <citation type="journal article" date="1998" name="Nature">
        <title>The genome sequence of Rickettsia prowazekii and the origin of mitochondria.</title>
        <authorList>
            <person name="Andersson S.G.E."/>
            <person name="Zomorodipour A."/>
            <person name="Andersson J.O."/>
            <person name="Sicheritz-Ponten T."/>
            <person name="Alsmark U.C.M."/>
            <person name="Podowski R.M."/>
            <person name="Naeslund A.K."/>
            <person name="Eriksson A.-S."/>
            <person name="Winkler H.H."/>
            <person name="Kurland C.G."/>
        </authorList>
    </citation>
    <scope>NUCLEOTIDE SEQUENCE [LARGE SCALE GENOMIC DNA]</scope>
    <source>
        <strain>Madrid E</strain>
    </source>
</reference>
<evidence type="ECO:0000255" key="1">
    <source>
        <dbReference type="HAMAP-Rule" id="MF_00185"/>
    </source>
</evidence>
<keyword id="KW-0067">ATP-binding</keyword>
<keyword id="KW-0460">Magnesium</keyword>
<keyword id="KW-0547">Nucleotide-binding</keyword>
<keyword id="KW-1185">Reference proteome</keyword>
<keyword id="KW-0808">Transferase</keyword>
<keyword id="KW-0819">tRNA processing</keyword>
<dbReference type="EC" id="2.5.1.75" evidence="1"/>
<dbReference type="EMBL" id="AJ235272">
    <property type="protein sequence ID" value="CAA14962.1"/>
    <property type="molecule type" value="Genomic_DNA"/>
</dbReference>
<dbReference type="PIR" id="H71654">
    <property type="entry name" value="H71654"/>
</dbReference>
<dbReference type="RefSeq" id="NP_220886.1">
    <property type="nucleotide sequence ID" value="NC_000963.1"/>
</dbReference>
<dbReference type="RefSeq" id="WP_004599082.1">
    <property type="nucleotide sequence ID" value="NC_000963.1"/>
</dbReference>
<dbReference type="SMR" id="Q9ZD37"/>
<dbReference type="STRING" id="272947.gene:17555590"/>
<dbReference type="EnsemblBacteria" id="CAA14962">
    <property type="protein sequence ID" value="CAA14962"/>
    <property type="gene ID" value="CAA14962"/>
</dbReference>
<dbReference type="GeneID" id="57569632"/>
<dbReference type="KEGG" id="rpr:RP510"/>
<dbReference type="PATRIC" id="fig|272947.5.peg.519"/>
<dbReference type="eggNOG" id="COG0324">
    <property type="taxonomic scope" value="Bacteria"/>
</dbReference>
<dbReference type="HOGENOM" id="CLU_032616_0_1_5"/>
<dbReference type="OrthoDB" id="9776390at2"/>
<dbReference type="Proteomes" id="UP000002480">
    <property type="component" value="Chromosome"/>
</dbReference>
<dbReference type="GO" id="GO:0005524">
    <property type="term" value="F:ATP binding"/>
    <property type="evidence" value="ECO:0007669"/>
    <property type="project" value="UniProtKB-UniRule"/>
</dbReference>
<dbReference type="GO" id="GO:0052381">
    <property type="term" value="F:tRNA dimethylallyltransferase activity"/>
    <property type="evidence" value="ECO:0007669"/>
    <property type="project" value="UniProtKB-UniRule"/>
</dbReference>
<dbReference type="GO" id="GO:0006400">
    <property type="term" value="P:tRNA modification"/>
    <property type="evidence" value="ECO:0007669"/>
    <property type="project" value="TreeGrafter"/>
</dbReference>
<dbReference type="Gene3D" id="1.10.20.140">
    <property type="match status" value="1"/>
</dbReference>
<dbReference type="Gene3D" id="3.40.50.300">
    <property type="entry name" value="P-loop containing nucleotide triphosphate hydrolases"/>
    <property type="match status" value="1"/>
</dbReference>
<dbReference type="HAMAP" id="MF_00185">
    <property type="entry name" value="IPP_trans"/>
    <property type="match status" value="1"/>
</dbReference>
<dbReference type="InterPro" id="IPR039657">
    <property type="entry name" value="Dimethylallyltransferase"/>
</dbReference>
<dbReference type="InterPro" id="IPR018022">
    <property type="entry name" value="IPT"/>
</dbReference>
<dbReference type="InterPro" id="IPR027417">
    <property type="entry name" value="P-loop_NTPase"/>
</dbReference>
<dbReference type="NCBIfam" id="TIGR00174">
    <property type="entry name" value="miaA"/>
    <property type="match status" value="1"/>
</dbReference>
<dbReference type="PANTHER" id="PTHR11088">
    <property type="entry name" value="TRNA DIMETHYLALLYLTRANSFERASE"/>
    <property type="match status" value="1"/>
</dbReference>
<dbReference type="PANTHER" id="PTHR11088:SF60">
    <property type="entry name" value="TRNA DIMETHYLALLYLTRANSFERASE"/>
    <property type="match status" value="1"/>
</dbReference>
<dbReference type="Pfam" id="PF01715">
    <property type="entry name" value="IPPT"/>
    <property type="match status" value="1"/>
</dbReference>
<dbReference type="SUPFAM" id="SSF52540">
    <property type="entry name" value="P-loop containing nucleoside triphosphate hydrolases"/>
    <property type="match status" value="1"/>
</dbReference>
<sequence>MIKKEIIILCGPTASGKSCLGHELAKAYDCEIINIDSMQVYKEIPIITASPIQIYNTDIHYHLYNFLSITEDFSVIKYLKLAAKKIKEITVRGKLPILIGGTGLYINLLVFGYNNIPDISEDLRVQVRNLHDKIGNIELWNQLKKLDPIASTKINHCDTQRLIRAYEVFMHTGKSIFSFHTAPKERILSDFNFKIIFLNPERKFLYKTCDERLDKIFKDKAIDEIALLKKQFTPEEYAHLKAVGIKEILAYLDGNLTLDAALNVAQMRTRQYAKRQVTWFTHQIQDKTILEYSTQEEFAQILRHLLFILRS</sequence>
<proteinExistence type="inferred from homology"/>
<feature type="chain" id="PRO_0000163966" description="tRNA dimethylallyltransferase">
    <location>
        <begin position="1"/>
        <end position="311"/>
    </location>
</feature>
<feature type="region of interest" description="Interaction with substrate tRNA" evidence="1">
    <location>
        <begin position="36"/>
        <end position="39"/>
    </location>
</feature>
<feature type="region of interest" description="Interaction with substrate tRNA" evidence="1">
    <location>
        <begin position="160"/>
        <end position="164"/>
    </location>
</feature>
<feature type="binding site" evidence="1">
    <location>
        <begin position="11"/>
        <end position="18"/>
    </location>
    <ligand>
        <name>ATP</name>
        <dbReference type="ChEBI" id="CHEBI:30616"/>
    </ligand>
</feature>
<feature type="binding site" evidence="1">
    <location>
        <begin position="13"/>
        <end position="18"/>
    </location>
    <ligand>
        <name>substrate</name>
    </ligand>
</feature>
<feature type="site" description="Interaction with substrate tRNA" evidence="1">
    <location>
        <position position="102"/>
    </location>
</feature>
<feature type="site" description="Interaction with substrate tRNA" evidence="1">
    <location>
        <position position="124"/>
    </location>
</feature>
<name>MIAA_RICPR</name>
<gene>
    <name evidence="1" type="primary">miaA</name>
    <name type="ordered locus">RP510</name>
</gene>
<accession>Q9ZD37</accession>
<organism>
    <name type="scientific">Rickettsia prowazekii (strain Madrid E)</name>
    <dbReference type="NCBI Taxonomy" id="272947"/>
    <lineage>
        <taxon>Bacteria</taxon>
        <taxon>Pseudomonadati</taxon>
        <taxon>Pseudomonadota</taxon>
        <taxon>Alphaproteobacteria</taxon>
        <taxon>Rickettsiales</taxon>
        <taxon>Rickettsiaceae</taxon>
        <taxon>Rickettsieae</taxon>
        <taxon>Rickettsia</taxon>
        <taxon>typhus group</taxon>
    </lineage>
</organism>